<reference key="1">
    <citation type="journal article" date="2009" name="Genome Res.">
        <title>Newly introduced genomic prophage islands are critical determinants of in vivo competitiveness in the Liverpool epidemic strain of Pseudomonas aeruginosa.</title>
        <authorList>
            <person name="Winstanley C."/>
            <person name="Langille M.G.I."/>
            <person name="Fothergill J.L."/>
            <person name="Kukavica-Ibrulj I."/>
            <person name="Paradis-Bleau C."/>
            <person name="Sanschagrin F."/>
            <person name="Thomson N.R."/>
            <person name="Winsor G.L."/>
            <person name="Quail M.A."/>
            <person name="Lennard N."/>
            <person name="Bignell A."/>
            <person name="Clarke L."/>
            <person name="Seeger K."/>
            <person name="Saunders D."/>
            <person name="Harris D."/>
            <person name="Parkhill J."/>
            <person name="Hancock R.E.W."/>
            <person name="Brinkman F.S.L."/>
            <person name="Levesque R.C."/>
        </authorList>
    </citation>
    <scope>NUCLEOTIDE SEQUENCE [LARGE SCALE GENOMIC DNA]</scope>
    <source>
        <strain>LESB58</strain>
    </source>
</reference>
<organism>
    <name type="scientific">Pseudomonas aeruginosa (strain LESB58)</name>
    <dbReference type="NCBI Taxonomy" id="557722"/>
    <lineage>
        <taxon>Bacteria</taxon>
        <taxon>Pseudomonadati</taxon>
        <taxon>Pseudomonadota</taxon>
        <taxon>Gammaproteobacteria</taxon>
        <taxon>Pseudomonadales</taxon>
        <taxon>Pseudomonadaceae</taxon>
        <taxon>Pseudomonas</taxon>
    </lineage>
</organism>
<accession>B7UWJ4</accession>
<protein>
    <recommendedName>
        <fullName evidence="1">Ion-translocating oxidoreductase complex subunit A</fullName>
        <ecNumber evidence="1">7.-.-.-</ecNumber>
    </recommendedName>
    <alternativeName>
        <fullName evidence="1">Rnf electron transport complex subunit A</fullName>
    </alternativeName>
</protein>
<gene>
    <name evidence="1" type="primary">rnfA</name>
    <name type="ordered locus">PLES_15261</name>
</gene>
<proteinExistence type="inferred from homology"/>
<keyword id="KW-0997">Cell inner membrane</keyword>
<keyword id="KW-1003">Cell membrane</keyword>
<keyword id="KW-0249">Electron transport</keyword>
<keyword id="KW-0472">Membrane</keyword>
<keyword id="KW-1278">Translocase</keyword>
<keyword id="KW-0812">Transmembrane</keyword>
<keyword id="KW-1133">Transmembrane helix</keyword>
<keyword id="KW-0813">Transport</keyword>
<sequence>MTELALILVSAILVNNFVLVQFLGLCPFMGVSRKIETAIGLSLATTFVLTLAAMCSHILQRYVLRPLDLEYLRTIGFILVIAVVVQFTEMLVKKTSPLLYRVLGIFLPLITTNCIVLGVALLNANKAEYGFLQATTQGFGAGLGFSLVLVLFAALRERIAIADVPAPFRGAAIGMITAGLMSLAFMGFSGLVRP</sequence>
<comment type="function">
    <text evidence="1">Part of a membrane-bound complex that couples electron transfer with translocation of ions across the membrane.</text>
</comment>
<comment type="subunit">
    <text evidence="1">The complex is composed of six subunits: RnfA, RnfB, RnfC, RnfD, RnfE and RnfG.</text>
</comment>
<comment type="subcellular location">
    <subcellularLocation>
        <location evidence="1">Cell inner membrane</location>
        <topology evidence="1">Multi-pass membrane protein</topology>
    </subcellularLocation>
</comment>
<comment type="similarity">
    <text evidence="1">Belongs to the NqrDE/RnfAE family.</text>
</comment>
<feature type="chain" id="PRO_1000191730" description="Ion-translocating oxidoreductase complex subunit A">
    <location>
        <begin position="1"/>
        <end position="194"/>
    </location>
</feature>
<feature type="transmembrane region" description="Helical" evidence="1">
    <location>
        <begin position="4"/>
        <end position="24"/>
    </location>
</feature>
<feature type="transmembrane region" description="Helical" evidence="1">
    <location>
        <begin position="39"/>
        <end position="59"/>
    </location>
</feature>
<feature type="transmembrane region" description="Helical" evidence="1">
    <location>
        <begin position="72"/>
        <end position="92"/>
    </location>
</feature>
<feature type="transmembrane region" description="Helical" evidence="1">
    <location>
        <begin position="102"/>
        <end position="122"/>
    </location>
</feature>
<feature type="transmembrane region" description="Helical" evidence="1">
    <location>
        <begin position="135"/>
        <end position="155"/>
    </location>
</feature>
<feature type="transmembrane region" description="Helical" evidence="1">
    <location>
        <begin position="172"/>
        <end position="192"/>
    </location>
</feature>
<evidence type="ECO:0000255" key="1">
    <source>
        <dbReference type="HAMAP-Rule" id="MF_00459"/>
    </source>
</evidence>
<dbReference type="EC" id="7.-.-.-" evidence="1"/>
<dbReference type="EMBL" id="FM209186">
    <property type="protein sequence ID" value="CAW26254.1"/>
    <property type="molecule type" value="Genomic_DNA"/>
</dbReference>
<dbReference type="SMR" id="B7UWJ4"/>
<dbReference type="KEGG" id="pag:PLES_15261"/>
<dbReference type="HOGENOM" id="CLU_095255_1_0_6"/>
<dbReference type="GO" id="GO:0005886">
    <property type="term" value="C:plasma membrane"/>
    <property type="evidence" value="ECO:0007669"/>
    <property type="project" value="UniProtKB-SubCell"/>
</dbReference>
<dbReference type="GO" id="GO:0022900">
    <property type="term" value="P:electron transport chain"/>
    <property type="evidence" value="ECO:0007669"/>
    <property type="project" value="UniProtKB-UniRule"/>
</dbReference>
<dbReference type="HAMAP" id="MF_00459">
    <property type="entry name" value="RsxA_RnfA"/>
    <property type="match status" value="1"/>
</dbReference>
<dbReference type="InterPro" id="IPR011293">
    <property type="entry name" value="Ion_transpt_RnfA/RsxA"/>
</dbReference>
<dbReference type="InterPro" id="IPR003667">
    <property type="entry name" value="NqrDE/RnfAE"/>
</dbReference>
<dbReference type="InterPro" id="IPR050133">
    <property type="entry name" value="NqrDE/RnfAE_oxidrdctase"/>
</dbReference>
<dbReference type="NCBIfam" id="NF003481">
    <property type="entry name" value="PRK05151.1"/>
    <property type="match status" value="1"/>
</dbReference>
<dbReference type="NCBIfam" id="TIGR01943">
    <property type="entry name" value="rnfA"/>
    <property type="match status" value="1"/>
</dbReference>
<dbReference type="PANTHER" id="PTHR30335">
    <property type="entry name" value="INTEGRAL MEMBRANE PROTEIN OF SOXR-REDUCING COMPLEX"/>
    <property type="match status" value="1"/>
</dbReference>
<dbReference type="PANTHER" id="PTHR30335:SF0">
    <property type="entry name" value="ION-TRANSLOCATING OXIDOREDUCTASE COMPLEX SUBUNIT A"/>
    <property type="match status" value="1"/>
</dbReference>
<dbReference type="Pfam" id="PF02508">
    <property type="entry name" value="Rnf-Nqr"/>
    <property type="match status" value="1"/>
</dbReference>
<dbReference type="PIRSF" id="PIRSF006102">
    <property type="entry name" value="NQR_DE"/>
    <property type="match status" value="1"/>
</dbReference>
<name>RNFA_PSEA8</name>